<sequence length="486" mass="54658">MTNTFYLLPVEIWVKIVNFSNETSLLLTNKEFFELSSLINVEQNIFEYVIRNDYWHILDYVSNLEKNKSEKYPIVCKFKEYTNDLFKYVIEFCISGKLDSIKRLVSMGANVREHNDVALNRAVENGHMDIFEYLISKGADLYANKNTLVRCASYGGNLDMVKYLISIGANFRENCDTPLIWACHNGHLEIVKYLVDQGADVNSQSHKSIITASKMGHLGIVKYLVSKTTNIDWRHNYAAAFAAQNNHLEIVKYLVNEGANLEIEDGCIIRVAAKNGHLDIVKYLVSLGMEIGFKKILIGTSNFGVVNKITPVIGSAVEGGHLSMVKYFVSIGATIKEKNYAFVKAAEYGHLEIIKYLVSQGISLEKKINKALIVACSKGHLEIVKYLVENGANVKTNEGLPLRQACWGNYLDIAKYLVSNGADVTSYDNYALKTALEKGDLETVKYFIYVGANVNDISSWDLKFISVLGRSEVLEYLKSTFNIKLS</sequence>
<protein>
    <recommendedName>
        <fullName>Putative ankyrin repeat protein R634</fullName>
    </recommendedName>
</protein>
<organismHost>
    <name type="scientific">Acanthamoeba polyphaga</name>
    <name type="common">Amoeba</name>
    <dbReference type="NCBI Taxonomy" id="5757"/>
</organismHost>
<name>YR634_MIMIV</name>
<keyword id="KW-0040">ANK repeat</keyword>
<keyword id="KW-1185">Reference proteome</keyword>
<keyword id="KW-0677">Repeat</keyword>
<reference key="1">
    <citation type="journal article" date="2004" name="Science">
        <title>The 1.2-megabase genome sequence of Mimivirus.</title>
        <authorList>
            <person name="Raoult D."/>
            <person name="Audic S."/>
            <person name="Robert C."/>
            <person name="Abergel C."/>
            <person name="Renesto P."/>
            <person name="Ogata H."/>
            <person name="La Scola B."/>
            <person name="Susan M."/>
            <person name="Claverie J.-M."/>
        </authorList>
    </citation>
    <scope>NUCLEOTIDE SEQUENCE [LARGE SCALE GENOMIC DNA]</scope>
    <source>
        <strain>Rowbotham-Bradford</strain>
    </source>
</reference>
<proteinExistence type="predicted"/>
<organism>
    <name type="scientific">Acanthamoeba polyphaga mimivirus</name>
    <name type="common">APMV</name>
    <dbReference type="NCBI Taxonomy" id="212035"/>
    <lineage>
        <taxon>Viruses</taxon>
        <taxon>Varidnaviria</taxon>
        <taxon>Bamfordvirae</taxon>
        <taxon>Nucleocytoviricota</taxon>
        <taxon>Megaviricetes</taxon>
        <taxon>Imitervirales</taxon>
        <taxon>Mimiviridae</taxon>
        <taxon>Megamimivirinae</taxon>
        <taxon>Mimivirus</taxon>
        <taxon>Mimivirus bradfordmassiliense</taxon>
    </lineage>
</organism>
<feature type="chain" id="PRO_0000067183" description="Putative ankyrin repeat protein R634">
    <location>
        <begin position="1"/>
        <end position="486"/>
    </location>
</feature>
<feature type="repeat" description="ANK 1">
    <location>
        <begin position="84"/>
        <end position="113"/>
    </location>
</feature>
<feature type="repeat" description="ANK 2">
    <location>
        <begin position="114"/>
        <end position="143"/>
    </location>
</feature>
<feature type="repeat" description="ANK 3">
    <location>
        <begin position="145"/>
        <end position="173"/>
    </location>
</feature>
<feature type="repeat" description="ANK 4">
    <location>
        <begin position="174"/>
        <end position="203"/>
    </location>
</feature>
<feature type="repeat" description="ANK 5">
    <location>
        <begin position="205"/>
        <end position="233"/>
    </location>
</feature>
<feature type="repeat" description="ANK 6">
    <location>
        <begin position="234"/>
        <end position="263"/>
    </location>
</feature>
<feature type="repeat" description="ANK 7">
    <location>
        <begin position="265"/>
        <end position="293"/>
    </location>
</feature>
<feature type="repeat" description="ANK 8">
    <location>
        <begin position="307"/>
        <end position="336"/>
    </location>
</feature>
<feature type="repeat" description="ANK 9">
    <location>
        <begin position="337"/>
        <end position="366"/>
    </location>
</feature>
<feature type="repeat" description="ANK 10">
    <location>
        <begin position="367"/>
        <end position="396"/>
    </location>
</feature>
<feature type="repeat" description="ANK 11">
    <location>
        <begin position="398"/>
        <end position="426"/>
    </location>
</feature>
<feature type="repeat" description="ANK 12">
    <location>
        <begin position="427"/>
        <end position="456"/>
    </location>
</feature>
<dbReference type="EMBL" id="AY653733">
    <property type="protein sequence ID" value="AAV50895.1"/>
    <property type="molecule type" value="Genomic_DNA"/>
</dbReference>
<dbReference type="SMR" id="Q5UR87"/>
<dbReference type="KEGG" id="vg:9925277"/>
<dbReference type="OrthoDB" id="269at10240"/>
<dbReference type="Proteomes" id="UP000001134">
    <property type="component" value="Genome"/>
</dbReference>
<dbReference type="Gene3D" id="1.25.40.20">
    <property type="entry name" value="Ankyrin repeat-containing domain"/>
    <property type="match status" value="4"/>
</dbReference>
<dbReference type="InterPro" id="IPR002110">
    <property type="entry name" value="Ankyrin_rpt"/>
</dbReference>
<dbReference type="InterPro" id="IPR036770">
    <property type="entry name" value="Ankyrin_rpt-contain_sf"/>
</dbReference>
<dbReference type="PANTHER" id="PTHR44207:SF1">
    <property type="entry name" value="SURFACE ANTIGEN BSPA-LIKE"/>
    <property type="match status" value="1"/>
</dbReference>
<dbReference type="PANTHER" id="PTHR44207">
    <property type="entry name" value="SURFACE ANTIGEN BSPA-LIKE-RELATED"/>
    <property type="match status" value="1"/>
</dbReference>
<dbReference type="Pfam" id="PF00023">
    <property type="entry name" value="Ank"/>
    <property type="match status" value="1"/>
</dbReference>
<dbReference type="Pfam" id="PF12796">
    <property type="entry name" value="Ank_2"/>
    <property type="match status" value="3"/>
</dbReference>
<dbReference type="Pfam" id="PF13637">
    <property type="entry name" value="Ank_4"/>
    <property type="match status" value="1"/>
</dbReference>
<dbReference type="SMART" id="SM00248">
    <property type="entry name" value="ANK"/>
    <property type="match status" value="12"/>
</dbReference>
<dbReference type="SUPFAM" id="SSF48403">
    <property type="entry name" value="Ankyrin repeat"/>
    <property type="match status" value="1"/>
</dbReference>
<dbReference type="PROSITE" id="PS50297">
    <property type="entry name" value="ANK_REP_REGION"/>
    <property type="match status" value="1"/>
</dbReference>
<dbReference type="PROSITE" id="PS50088">
    <property type="entry name" value="ANK_REPEAT"/>
    <property type="match status" value="5"/>
</dbReference>
<accession>Q5UR87</accession>
<gene>
    <name type="ordered locus">MIMI_R634</name>
</gene>